<gene>
    <name evidence="1" type="primary">coaD</name>
    <name type="ordered locus">Fjoh_2616</name>
</gene>
<accession>A5FGN1</accession>
<keyword id="KW-0067">ATP-binding</keyword>
<keyword id="KW-0173">Coenzyme A biosynthesis</keyword>
<keyword id="KW-0963">Cytoplasm</keyword>
<keyword id="KW-0460">Magnesium</keyword>
<keyword id="KW-0547">Nucleotide-binding</keyword>
<keyword id="KW-0548">Nucleotidyltransferase</keyword>
<keyword id="KW-0808">Transferase</keyword>
<feature type="chain" id="PRO_1000076765" description="Phosphopantetheine adenylyltransferase">
    <location>
        <begin position="1"/>
        <end position="152"/>
    </location>
</feature>
<feature type="binding site" evidence="1">
    <location>
        <begin position="9"/>
        <end position="10"/>
    </location>
    <ligand>
        <name>ATP</name>
        <dbReference type="ChEBI" id="CHEBI:30616"/>
    </ligand>
</feature>
<feature type="binding site" evidence="1">
    <location>
        <position position="9"/>
    </location>
    <ligand>
        <name>substrate</name>
    </ligand>
</feature>
<feature type="binding site" evidence="1">
    <location>
        <position position="17"/>
    </location>
    <ligand>
        <name>ATP</name>
        <dbReference type="ChEBI" id="CHEBI:30616"/>
    </ligand>
</feature>
<feature type="binding site" evidence="1">
    <location>
        <position position="41"/>
    </location>
    <ligand>
        <name>substrate</name>
    </ligand>
</feature>
<feature type="binding site" evidence="1">
    <location>
        <position position="73"/>
    </location>
    <ligand>
        <name>substrate</name>
    </ligand>
</feature>
<feature type="binding site" evidence="1">
    <location>
        <position position="87"/>
    </location>
    <ligand>
        <name>substrate</name>
    </ligand>
</feature>
<feature type="binding site" evidence="1">
    <location>
        <begin position="88"/>
        <end position="90"/>
    </location>
    <ligand>
        <name>ATP</name>
        <dbReference type="ChEBI" id="CHEBI:30616"/>
    </ligand>
</feature>
<feature type="binding site" evidence="1">
    <location>
        <position position="98"/>
    </location>
    <ligand>
        <name>ATP</name>
        <dbReference type="ChEBI" id="CHEBI:30616"/>
    </ligand>
</feature>
<feature type="binding site" evidence="1">
    <location>
        <begin position="122"/>
        <end position="128"/>
    </location>
    <ligand>
        <name>ATP</name>
        <dbReference type="ChEBI" id="CHEBI:30616"/>
    </ligand>
</feature>
<feature type="site" description="Transition state stabilizer" evidence="1">
    <location>
        <position position="17"/>
    </location>
</feature>
<evidence type="ECO:0000255" key="1">
    <source>
        <dbReference type="HAMAP-Rule" id="MF_00151"/>
    </source>
</evidence>
<reference key="1">
    <citation type="journal article" date="2009" name="Appl. Environ. Microbiol.">
        <title>Novel features of the polysaccharide-digesting gliding bacterium Flavobacterium johnsoniae as revealed by genome sequence analysis.</title>
        <authorList>
            <person name="McBride M.J."/>
            <person name="Xie G."/>
            <person name="Martens E.C."/>
            <person name="Lapidus A."/>
            <person name="Henrissat B."/>
            <person name="Rhodes R.G."/>
            <person name="Goltsman E."/>
            <person name="Wang W."/>
            <person name="Xu J."/>
            <person name="Hunnicutt D.W."/>
            <person name="Staroscik A.M."/>
            <person name="Hoover T.R."/>
            <person name="Cheng Y.Q."/>
            <person name="Stein J.L."/>
        </authorList>
    </citation>
    <scope>NUCLEOTIDE SEQUENCE [LARGE SCALE GENOMIC DNA]</scope>
    <source>
        <strain>ATCC 17061 / DSM 2064 / JCM 8514 / BCRC 14874 / CCUG 350202 / NBRC 14942 / NCIMB 11054 / UW101</strain>
    </source>
</reference>
<comment type="function">
    <text evidence="1">Reversibly transfers an adenylyl group from ATP to 4'-phosphopantetheine, yielding dephospho-CoA (dPCoA) and pyrophosphate.</text>
</comment>
<comment type="catalytic activity">
    <reaction evidence="1">
        <text>(R)-4'-phosphopantetheine + ATP + H(+) = 3'-dephospho-CoA + diphosphate</text>
        <dbReference type="Rhea" id="RHEA:19801"/>
        <dbReference type="ChEBI" id="CHEBI:15378"/>
        <dbReference type="ChEBI" id="CHEBI:30616"/>
        <dbReference type="ChEBI" id="CHEBI:33019"/>
        <dbReference type="ChEBI" id="CHEBI:57328"/>
        <dbReference type="ChEBI" id="CHEBI:61723"/>
        <dbReference type="EC" id="2.7.7.3"/>
    </reaction>
</comment>
<comment type="cofactor">
    <cofactor evidence="1">
        <name>Mg(2+)</name>
        <dbReference type="ChEBI" id="CHEBI:18420"/>
    </cofactor>
</comment>
<comment type="pathway">
    <text evidence="1">Cofactor biosynthesis; coenzyme A biosynthesis; CoA from (R)-pantothenate: step 4/5.</text>
</comment>
<comment type="subunit">
    <text evidence="1">Homohexamer.</text>
</comment>
<comment type="subcellular location">
    <subcellularLocation>
        <location evidence="1">Cytoplasm</location>
    </subcellularLocation>
</comment>
<comment type="similarity">
    <text evidence="1">Belongs to the bacterial CoaD family.</text>
</comment>
<protein>
    <recommendedName>
        <fullName evidence="1">Phosphopantetheine adenylyltransferase</fullName>
        <ecNumber evidence="1">2.7.7.3</ecNumber>
    </recommendedName>
    <alternativeName>
        <fullName evidence="1">Dephospho-CoA pyrophosphorylase</fullName>
    </alternativeName>
    <alternativeName>
        <fullName evidence="1">Pantetheine-phosphate adenylyltransferase</fullName>
        <shortName evidence="1">PPAT</shortName>
    </alternativeName>
</protein>
<sequence>MRKAIFPGSFDPITLGHEDIIKRGIPLFDEIVIAIGVNAEKKYMFSLEERKRFIEETFKDEPKVSVITYEGLTIDLAKKQKAHFILRGLRNPADFEFEKAIAHTNRKLSKIETVFLLTAASTSFISSSIVRDVLRHGGEYEMLVPDAVRVKK</sequence>
<proteinExistence type="inferred from homology"/>
<name>COAD_FLAJ1</name>
<organism>
    <name type="scientific">Flavobacterium johnsoniae (strain ATCC 17061 / DSM 2064 / JCM 8514 / BCRC 14874 / CCUG 350202 / NBRC 14942 / NCIMB 11054 / UW101)</name>
    <name type="common">Cytophaga johnsonae</name>
    <dbReference type="NCBI Taxonomy" id="376686"/>
    <lineage>
        <taxon>Bacteria</taxon>
        <taxon>Pseudomonadati</taxon>
        <taxon>Bacteroidota</taxon>
        <taxon>Flavobacteriia</taxon>
        <taxon>Flavobacteriales</taxon>
        <taxon>Flavobacteriaceae</taxon>
        <taxon>Flavobacterium</taxon>
    </lineage>
</organism>
<dbReference type="EC" id="2.7.7.3" evidence="1"/>
<dbReference type="EMBL" id="CP000685">
    <property type="protein sequence ID" value="ABQ05643.1"/>
    <property type="molecule type" value="Genomic_DNA"/>
</dbReference>
<dbReference type="RefSeq" id="WP_012024682.1">
    <property type="nucleotide sequence ID" value="NC_009441.1"/>
</dbReference>
<dbReference type="SMR" id="A5FGN1"/>
<dbReference type="STRING" id="376686.Fjoh_2616"/>
<dbReference type="KEGG" id="fjo:Fjoh_2616"/>
<dbReference type="eggNOG" id="COG0669">
    <property type="taxonomic scope" value="Bacteria"/>
</dbReference>
<dbReference type="HOGENOM" id="CLU_100149_1_0_10"/>
<dbReference type="OrthoDB" id="9806661at2"/>
<dbReference type="UniPathway" id="UPA00241">
    <property type="reaction ID" value="UER00355"/>
</dbReference>
<dbReference type="Proteomes" id="UP000006694">
    <property type="component" value="Chromosome"/>
</dbReference>
<dbReference type="GO" id="GO:0005737">
    <property type="term" value="C:cytoplasm"/>
    <property type="evidence" value="ECO:0007669"/>
    <property type="project" value="UniProtKB-SubCell"/>
</dbReference>
<dbReference type="GO" id="GO:0005524">
    <property type="term" value="F:ATP binding"/>
    <property type="evidence" value="ECO:0007669"/>
    <property type="project" value="UniProtKB-KW"/>
</dbReference>
<dbReference type="GO" id="GO:0004595">
    <property type="term" value="F:pantetheine-phosphate adenylyltransferase activity"/>
    <property type="evidence" value="ECO:0007669"/>
    <property type="project" value="UniProtKB-UniRule"/>
</dbReference>
<dbReference type="GO" id="GO:0015937">
    <property type="term" value="P:coenzyme A biosynthetic process"/>
    <property type="evidence" value="ECO:0007669"/>
    <property type="project" value="UniProtKB-UniRule"/>
</dbReference>
<dbReference type="CDD" id="cd02163">
    <property type="entry name" value="PPAT"/>
    <property type="match status" value="1"/>
</dbReference>
<dbReference type="Gene3D" id="3.40.50.620">
    <property type="entry name" value="HUPs"/>
    <property type="match status" value="1"/>
</dbReference>
<dbReference type="HAMAP" id="MF_00151">
    <property type="entry name" value="PPAT_bact"/>
    <property type="match status" value="1"/>
</dbReference>
<dbReference type="InterPro" id="IPR004821">
    <property type="entry name" value="Cyt_trans-like"/>
</dbReference>
<dbReference type="InterPro" id="IPR001980">
    <property type="entry name" value="PPAT"/>
</dbReference>
<dbReference type="InterPro" id="IPR014729">
    <property type="entry name" value="Rossmann-like_a/b/a_fold"/>
</dbReference>
<dbReference type="NCBIfam" id="TIGR01510">
    <property type="entry name" value="coaD_prev_kdtB"/>
    <property type="match status" value="1"/>
</dbReference>
<dbReference type="NCBIfam" id="TIGR00125">
    <property type="entry name" value="cyt_tran_rel"/>
    <property type="match status" value="1"/>
</dbReference>
<dbReference type="PANTHER" id="PTHR21342">
    <property type="entry name" value="PHOSPHOPANTETHEINE ADENYLYLTRANSFERASE"/>
    <property type="match status" value="1"/>
</dbReference>
<dbReference type="PANTHER" id="PTHR21342:SF1">
    <property type="entry name" value="PHOSPHOPANTETHEINE ADENYLYLTRANSFERASE"/>
    <property type="match status" value="1"/>
</dbReference>
<dbReference type="Pfam" id="PF01467">
    <property type="entry name" value="CTP_transf_like"/>
    <property type="match status" value="1"/>
</dbReference>
<dbReference type="PRINTS" id="PR01020">
    <property type="entry name" value="LPSBIOSNTHSS"/>
</dbReference>
<dbReference type="SUPFAM" id="SSF52374">
    <property type="entry name" value="Nucleotidylyl transferase"/>
    <property type="match status" value="1"/>
</dbReference>